<gene>
    <name evidence="1" type="primary">rpsZ</name>
    <name evidence="1" type="synonym">rpsN</name>
    <name type="ordered locus">CPE2392</name>
</gene>
<reference key="1">
    <citation type="journal article" date="2002" name="Proc. Natl. Acad. Sci. U.S.A.">
        <title>Complete genome sequence of Clostridium perfringens, an anaerobic flesh-eater.</title>
        <authorList>
            <person name="Shimizu T."/>
            <person name="Ohtani K."/>
            <person name="Hirakawa H."/>
            <person name="Ohshima K."/>
            <person name="Yamashita A."/>
            <person name="Shiba T."/>
            <person name="Ogasawara N."/>
            <person name="Hattori M."/>
            <person name="Kuhara S."/>
            <person name="Hayashi H."/>
        </authorList>
    </citation>
    <scope>NUCLEOTIDE SEQUENCE [LARGE SCALE GENOMIC DNA]</scope>
    <source>
        <strain>13 / Type A</strain>
    </source>
</reference>
<sequence length="61" mass="7280">MARKAMIEKWKKEPKYKTRAYTRCRLCGRPHSVLKKFGICRICFRELAYKGEIPGCRKASW</sequence>
<comment type="function">
    <text evidence="1">Binds 16S rRNA, required for the assembly of 30S particles and may also be responsible for determining the conformation of the 16S rRNA at the A site.</text>
</comment>
<comment type="cofactor">
    <cofactor evidence="1">
        <name>Zn(2+)</name>
        <dbReference type="ChEBI" id="CHEBI:29105"/>
    </cofactor>
    <text evidence="1">Binds 1 zinc ion per subunit.</text>
</comment>
<comment type="subunit">
    <text evidence="1">Part of the 30S ribosomal subunit. Contacts proteins S3 and S10.</text>
</comment>
<comment type="similarity">
    <text evidence="1">Belongs to the universal ribosomal protein uS14 family. Zinc-binding uS14 subfamily.</text>
</comment>
<organism>
    <name type="scientific">Clostridium perfringens (strain 13 / Type A)</name>
    <dbReference type="NCBI Taxonomy" id="195102"/>
    <lineage>
        <taxon>Bacteria</taxon>
        <taxon>Bacillati</taxon>
        <taxon>Bacillota</taxon>
        <taxon>Clostridia</taxon>
        <taxon>Eubacteriales</taxon>
        <taxon>Clostridiaceae</taxon>
        <taxon>Clostridium</taxon>
    </lineage>
</organism>
<protein>
    <recommendedName>
        <fullName evidence="1">Small ribosomal subunit protein uS14</fullName>
    </recommendedName>
    <alternativeName>
        <fullName evidence="2">30S ribosomal protein S14 type Z</fullName>
    </alternativeName>
</protein>
<name>RS14Z_CLOPE</name>
<dbReference type="EMBL" id="BA000016">
    <property type="protein sequence ID" value="BAB82098.1"/>
    <property type="molecule type" value="Genomic_DNA"/>
</dbReference>
<dbReference type="RefSeq" id="WP_003470274.1">
    <property type="nucleotide sequence ID" value="NC_003366.1"/>
</dbReference>
<dbReference type="SMR" id="Q8XHT6"/>
<dbReference type="STRING" id="195102.gene:10491709"/>
<dbReference type="KEGG" id="cpe:CPE2392"/>
<dbReference type="HOGENOM" id="CLU_139869_3_0_9"/>
<dbReference type="Proteomes" id="UP000000818">
    <property type="component" value="Chromosome"/>
</dbReference>
<dbReference type="GO" id="GO:0005737">
    <property type="term" value="C:cytoplasm"/>
    <property type="evidence" value="ECO:0007669"/>
    <property type="project" value="UniProtKB-ARBA"/>
</dbReference>
<dbReference type="GO" id="GO:0015935">
    <property type="term" value="C:small ribosomal subunit"/>
    <property type="evidence" value="ECO:0007669"/>
    <property type="project" value="TreeGrafter"/>
</dbReference>
<dbReference type="GO" id="GO:0019843">
    <property type="term" value="F:rRNA binding"/>
    <property type="evidence" value="ECO:0007669"/>
    <property type="project" value="UniProtKB-UniRule"/>
</dbReference>
<dbReference type="GO" id="GO:0003735">
    <property type="term" value="F:structural constituent of ribosome"/>
    <property type="evidence" value="ECO:0007669"/>
    <property type="project" value="InterPro"/>
</dbReference>
<dbReference type="GO" id="GO:0008270">
    <property type="term" value="F:zinc ion binding"/>
    <property type="evidence" value="ECO:0007669"/>
    <property type="project" value="UniProtKB-UniRule"/>
</dbReference>
<dbReference type="GO" id="GO:0006412">
    <property type="term" value="P:translation"/>
    <property type="evidence" value="ECO:0007669"/>
    <property type="project" value="UniProtKB-UniRule"/>
</dbReference>
<dbReference type="FunFam" id="4.10.830.10:FF:000001">
    <property type="entry name" value="30S ribosomal protein S14 type Z"/>
    <property type="match status" value="1"/>
</dbReference>
<dbReference type="Gene3D" id="4.10.830.10">
    <property type="entry name" value="30s Ribosomal Protein S14, Chain N"/>
    <property type="match status" value="1"/>
</dbReference>
<dbReference type="HAMAP" id="MF_01364_B">
    <property type="entry name" value="Ribosomal_uS14_2_B"/>
    <property type="match status" value="1"/>
</dbReference>
<dbReference type="InterPro" id="IPR001209">
    <property type="entry name" value="Ribosomal_uS14"/>
</dbReference>
<dbReference type="InterPro" id="IPR023053">
    <property type="entry name" value="Ribosomal_uS14_bact"/>
</dbReference>
<dbReference type="InterPro" id="IPR018271">
    <property type="entry name" value="Ribosomal_uS14_CS"/>
</dbReference>
<dbReference type="InterPro" id="IPR043140">
    <property type="entry name" value="Ribosomal_uS14_sf"/>
</dbReference>
<dbReference type="NCBIfam" id="NF005974">
    <property type="entry name" value="PRK08061.1"/>
    <property type="match status" value="1"/>
</dbReference>
<dbReference type="PANTHER" id="PTHR19836">
    <property type="entry name" value="30S RIBOSOMAL PROTEIN S14"/>
    <property type="match status" value="1"/>
</dbReference>
<dbReference type="PANTHER" id="PTHR19836:SF19">
    <property type="entry name" value="SMALL RIBOSOMAL SUBUNIT PROTEIN US14M"/>
    <property type="match status" value="1"/>
</dbReference>
<dbReference type="Pfam" id="PF00253">
    <property type="entry name" value="Ribosomal_S14"/>
    <property type="match status" value="1"/>
</dbReference>
<dbReference type="SUPFAM" id="SSF57716">
    <property type="entry name" value="Glucocorticoid receptor-like (DNA-binding domain)"/>
    <property type="match status" value="1"/>
</dbReference>
<dbReference type="PROSITE" id="PS00527">
    <property type="entry name" value="RIBOSOMAL_S14"/>
    <property type="match status" value="1"/>
</dbReference>
<proteinExistence type="inferred from homology"/>
<accession>Q8XHT6</accession>
<keyword id="KW-0479">Metal-binding</keyword>
<keyword id="KW-1185">Reference proteome</keyword>
<keyword id="KW-0687">Ribonucleoprotein</keyword>
<keyword id="KW-0689">Ribosomal protein</keyword>
<keyword id="KW-0694">RNA-binding</keyword>
<keyword id="KW-0699">rRNA-binding</keyword>
<keyword id="KW-0862">Zinc</keyword>
<evidence type="ECO:0000255" key="1">
    <source>
        <dbReference type="HAMAP-Rule" id="MF_01364"/>
    </source>
</evidence>
<evidence type="ECO:0000305" key="2"/>
<feature type="chain" id="PRO_0000130888" description="Small ribosomal subunit protein uS14">
    <location>
        <begin position="1"/>
        <end position="61"/>
    </location>
</feature>
<feature type="binding site" evidence="1">
    <location>
        <position position="24"/>
    </location>
    <ligand>
        <name>Zn(2+)</name>
        <dbReference type="ChEBI" id="CHEBI:29105"/>
    </ligand>
</feature>
<feature type="binding site" evidence="1">
    <location>
        <position position="27"/>
    </location>
    <ligand>
        <name>Zn(2+)</name>
        <dbReference type="ChEBI" id="CHEBI:29105"/>
    </ligand>
</feature>
<feature type="binding site" evidence="1">
    <location>
        <position position="40"/>
    </location>
    <ligand>
        <name>Zn(2+)</name>
        <dbReference type="ChEBI" id="CHEBI:29105"/>
    </ligand>
</feature>
<feature type="binding site" evidence="1">
    <location>
        <position position="43"/>
    </location>
    <ligand>
        <name>Zn(2+)</name>
        <dbReference type="ChEBI" id="CHEBI:29105"/>
    </ligand>
</feature>